<dbReference type="EMBL" id="CP000253">
    <property type="protein sequence ID" value="ABD29575.1"/>
    <property type="molecule type" value="Genomic_DNA"/>
</dbReference>
<dbReference type="RefSeq" id="WP_000211540.1">
    <property type="nucleotide sequence ID" value="NZ_LS483365.1"/>
</dbReference>
<dbReference type="RefSeq" id="YP_498999.1">
    <property type="nucleotide sequence ID" value="NC_007795.1"/>
</dbReference>
<dbReference type="STRING" id="93061.SAOUHSC_00413"/>
<dbReference type="PaxDb" id="1280-SAXN108_0503"/>
<dbReference type="GeneID" id="3920571"/>
<dbReference type="KEGG" id="sao:SAOUHSC_00413"/>
<dbReference type="PATRIC" id="fig|93061.5.peg.379"/>
<dbReference type="eggNOG" id="COG3002">
    <property type="taxonomic scope" value="Bacteria"/>
</dbReference>
<dbReference type="HOGENOM" id="CLU_009885_0_0_9"/>
<dbReference type="OrthoDB" id="9805101at2"/>
<dbReference type="PRO" id="PR:Q2G0W1"/>
<dbReference type="Proteomes" id="UP000008816">
    <property type="component" value="Chromosome"/>
</dbReference>
<dbReference type="GO" id="GO:0005886">
    <property type="term" value="C:plasma membrane"/>
    <property type="evidence" value="ECO:0007669"/>
    <property type="project" value="UniProtKB-SubCell"/>
</dbReference>
<dbReference type="GO" id="GO:0008270">
    <property type="term" value="F:zinc ion binding"/>
    <property type="evidence" value="ECO:0007669"/>
    <property type="project" value="UniProtKB-UniRule"/>
</dbReference>
<dbReference type="HAMAP" id="MF_01871">
    <property type="entry name" value="DabA"/>
    <property type="match status" value="1"/>
</dbReference>
<dbReference type="InterPro" id="IPR018752">
    <property type="entry name" value="DabA"/>
</dbReference>
<dbReference type="PANTHER" id="PTHR38344:SF1">
    <property type="entry name" value="INORGANIC CARBON TRANSPORTER SUBUNIT DABA-RELATED"/>
    <property type="match status" value="1"/>
</dbReference>
<dbReference type="PANTHER" id="PTHR38344">
    <property type="entry name" value="UPF0753 PROTEIN AQ_863"/>
    <property type="match status" value="1"/>
</dbReference>
<dbReference type="Pfam" id="PF10070">
    <property type="entry name" value="DabA"/>
    <property type="match status" value="1"/>
</dbReference>
<evidence type="ECO:0000255" key="1">
    <source>
        <dbReference type="HAMAP-Rule" id="MF_01871"/>
    </source>
</evidence>
<gene>
    <name evidence="1" type="primary">dabA</name>
    <name type="ordered locus">SAOUHSC_00413</name>
</gene>
<accession>Q2G0W1</accession>
<reference key="1">
    <citation type="book" date="2006" name="Gram positive pathogens, 2nd edition">
        <title>The Staphylococcus aureus NCTC 8325 genome.</title>
        <editorList>
            <person name="Fischetti V."/>
            <person name="Novick R."/>
            <person name="Ferretti J."/>
            <person name="Portnoy D."/>
            <person name="Rood J."/>
        </editorList>
        <authorList>
            <person name="Gillaspy A.F."/>
            <person name="Worrell V."/>
            <person name="Orvis J."/>
            <person name="Roe B.A."/>
            <person name="Dyer D.W."/>
            <person name="Iandolo J.J."/>
        </authorList>
    </citation>
    <scope>NUCLEOTIDE SEQUENCE [LARGE SCALE GENOMIC DNA]</scope>
    <source>
        <strain>NCTC 8325 / PS 47</strain>
    </source>
</reference>
<comment type="function">
    <text evidence="1">Part of an energy-coupled inorganic carbon pump.</text>
</comment>
<comment type="cofactor">
    <cofactor evidence="1">
        <name>Zn(2+)</name>
        <dbReference type="ChEBI" id="CHEBI:29105"/>
    </cofactor>
</comment>
<comment type="subunit">
    <text evidence="1">Forms a complex with DabB.</text>
</comment>
<comment type="subcellular location">
    <subcellularLocation>
        <location evidence="1">Cell membrane</location>
        <topology evidence="1">Peripheral membrane protein</topology>
    </subcellularLocation>
</comment>
<comment type="similarity">
    <text evidence="1">Belongs to the inorganic carbon transporter (TC 9.A.2) DabA family.</text>
</comment>
<protein>
    <recommendedName>
        <fullName evidence="1">Probable inorganic carbon transporter subunit DabA</fullName>
    </recommendedName>
</protein>
<sequence length="901" mass="102617">MTTQLNINSVIENAKRVITPLSPISIFAARNPWEGLEADTFEDVAKWLRDVRDVDIFPNKALIESAVARGELDESVFNQLVTDMLLEHHYNIPQHYINLYIDNIKTLKDVPASYMNHSNVDVVADLLLEKSKRDMAESYHHYDVRPMSDAIIDEQGEPLSEQVNRQMIKWTKLYIDQFLSSWTMPKREQSFYHAWLHLAQHDHSFTKAQRQVIKGLPNDPEMTIESVLTHFSIDQEDYQAYVEGHLLALPGWAGMLYYRSQQHHFEQHLLTDYLAIRLVVEQLLVGDEFKSVAKDCESRSENWFKQTVASWCYYSDMPSDVLLQHDVNEIQTFIHFAATMNKNVFKNLWLIAWEMTYESQLKQKIKAGHESVAGALDVNQVNVSENDNANQPHSVLLNDTQAVDENNSELNQMGTSTKAQIAFCIDVRSEPFRRHIEAAGPFETIGIAGFFGLPIQKDAVDEQFKHDSLPVMVPPAYRIKEFADRYDMNVYRQQQQTMSSMFYTFKLMKNNVMPSLLLPELSGPFLSLSTIVNSIMPRKSRASLQKIKQKWLKKPETKLTIDREFDRTSDLPVGFTEQEQIDFALQALKLMDLTEAFAPFVVLAGHASHSHNNPHHASLECGACGGASSGFNAKLLAMICNRPNVRQGLKQSGVYIPETTVFAVAEHHTSTDTLAWVYVPDTLSSIALDAYESLNDAMPMISEHANRERLDKLPTIGRVNHPVEEAQRFASDWSEVRPEWGLAKNASFIIGRRQLTKGIDLEGRTFLHNYDWRKDKDGTLLNTIISGPALVAQWINLQYYASTVAPHFYGSGNKATQTVTSGVGVMQGNASDLMYGLSWQSVMAADRTMYHSPIRLLVVIQAPDYVVARLLANNEHFARKVSNHWLRLMSVNEEGRFKSWI</sequence>
<feature type="chain" id="PRO_0000387312" description="Probable inorganic carbon transporter subunit DabA">
    <location>
        <begin position="1"/>
        <end position="901"/>
    </location>
</feature>
<feature type="binding site" evidence="1">
    <location>
        <position position="424"/>
    </location>
    <ligand>
        <name>Zn(2+)</name>
        <dbReference type="ChEBI" id="CHEBI:29105"/>
    </ligand>
</feature>
<feature type="binding site" evidence="1">
    <location>
        <position position="426"/>
    </location>
    <ligand>
        <name>Zn(2+)</name>
        <dbReference type="ChEBI" id="CHEBI:29105"/>
    </ligand>
</feature>
<feature type="binding site" evidence="1">
    <location>
        <position position="606"/>
    </location>
    <ligand>
        <name>Zn(2+)</name>
        <dbReference type="ChEBI" id="CHEBI:29105"/>
    </ligand>
</feature>
<feature type="binding site" evidence="1">
    <location>
        <position position="621"/>
    </location>
    <ligand>
        <name>Zn(2+)</name>
        <dbReference type="ChEBI" id="CHEBI:29105"/>
    </ligand>
</feature>
<keyword id="KW-1003">Cell membrane</keyword>
<keyword id="KW-0472">Membrane</keyword>
<keyword id="KW-0479">Metal-binding</keyword>
<keyword id="KW-1185">Reference proteome</keyword>
<keyword id="KW-0813">Transport</keyword>
<keyword id="KW-0862">Zinc</keyword>
<name>DABA_STAA8</name>
<organism>
    <name type="scientific">Staphylococcus aureus (strain NCTC 8325 / PS 47)</name>
    <dbReference type="NCBI Taxonomy" id="93061"/>
    <lineage>
        <taxon>Bacteria</taxon>
        <taxon>Bacillati</taxon>
        <taxon>Bacillota</taxon>
        <taxon>Bacilli</taxon>
        <taxon>Bacillales</taxon>
        <taxon>Staphylococcaceae</taxon>
        <taxon>Staphylococcus</taxon>
    </lineage>
</organism>
<proteinExistence type="inferred from homology"/>